<protein>
    <recommendedName>
        <fullName>Probable 26S proteasome non-ATPase regulatory subunit 9</fullName>
    </recommendedName>
</protein>
<reference key="1">
    <citation type="journal article" date="1998" name="Science">
        <title>Genome sequence of the nematode C. elegans: a platform for investigating biology.</title>
        <authorList>
            <consortium name="The C. elegans sequencing consortium"/>
        </authorList>
    </citation>
    <scope>NUCLEOTIDE SEQUENCE [LARGE SCALE GENOMIC DNA]</scope>
    <source>
        <strain>Bristol N2</strain>
    </source>
</reference>
<feature type="chain" id="PRO_0000173855" description="Probable 26S proteasome non-ATPase regulatory subunit 9">
    <location>
        <begin position="1"/>
        <end position="197"/>
    </location>
</feature>
<feature type="domain" description="PDZ">
    <location>
        <begin position="75"/>
        <end position="166"/>
    </location>
</feature>
<gene>
    <name type="primary">psmd-9</name>
    <name type="ORF">C44B7.1</name>
</gene>
<keyword id="KW-0143">Chaperone</keyword>
<keyword id="KW-1185">Reference proteome</keyword>
<organism>
    <name type="scientific">Caenorhabditis elegans</name>
    <dbReference type="NCBI Taxonomy" id="6239"/>
    <lineage>
        <taxon>Eukaryota</taxon>
        <taxon>Metazoa</taxon>
        <taxon>Ecdysozoa</taxon>
        <taxon>Nematoda</taxon>
        <taxon>Chromadorea</taxon>
        <taxon>Rhabditida</taxon>
        <taxon>Rhabditina</taxon>
        <taxon>Rhabditomorpha</taxon>
        <taxon>Rhabditoidea</taxon>
        <taxon>Rhabditidae</taxon>
        <taxon>Peloderinae</taxon>
        <taxon>Caenorhabditis</taxon>
    </lineage>
</organism>
<evidence type="ECO:0000250" key="1"/>
<evidence type="ECO:0000305" key="2"/>
<comment type="function">
    <text evidence="1">Acts as a chaperone during the assembly of the 26S proteasome, specifically of the base subcomplex of the 19S regulatory complex (RC).</text>
</comment>
<comment type="interaction">
    <interactant intactId="EBI-317193">
        <id>Q10920</id>
    </interactant>
    <interactant intactId="EBI-317201">
        <id>O76371</id>
        <label>rpt-5</label>
    </interactant>
    <organismsDiffer>false</organismsDiffer>
    <experiments>3</experiments>
</comment>
<comment type="similarity">
    <text evidence="2">Belongs to the proteasome subunit p27 family.</text>
</comment>
<sequence length="197" mass="22133">MDHHSKAKELLQQRDELDGKIKELMLVLETNNSTMDSPLLDAEGYPLNTIDVYAVRHARHDLICLRNDRAALTEKIVVEMENENKEVSGQTATSEEKPVHRTSNEPFVKISSVVELSPADIGGFRKDDLIIQYGNLHHGNFNDMQEVAQITKQSEDKIIRVTVIRENRPVRLEICPKKWSGPGLLGCNIVPISGANV</sequence>
<dbReference type="EMBL" id="FO080139">
    <property type="protein sequence ID" value="CCD61554.1"/>
    <property type="molecule type" value="Genomic_DNA"/>
</dbReference>
<dbReference type="PIR" id="T15289">
    <property type="entry name" value="T15289"/>
</dbReference>
<dbReference type="RefSeq" id="NP_001293499.1">
    <property type="nucleotide sequence ID" value="NM_001306570.1"/>
</dbReference>
<dbReference type="RefSeq" id="NP_001379558.1">
    <property type="nucleotide sequence ID" value="NM_001393109.1"/>
</dbReference>
<dbReference type="SMR" id="Q10920"/>
<dbReference type="FunCoup" id="Q10920">
    <property type="interactions" value="3075"/>
</dbReference>
<dbReference type="IntAct" id="Q10920">
    <property type="interactions" value="6"/>
</dbReference>
<dbReference type="STRING" id="6239.C44B7.1.1"/>
<dbReference type="PaxDb" id="6239-C44B7.1"/>
<dbReference type="PeptideAtlas" id="Q10920"/>
<dbReference type="EnsemblMetazoa" id="C44B7.1.1">
    <property type="protein sequence ID" value="C44B7.1.1"/>
    <property type="gene ID" value="WBGene00016623"/>
</dbReference>
<dbReference type="GeneID" id="24104302"/>
<dbReference type="UCSC" id="C44B7.1.2">
    <property type="organism name" value="c. elegans"/>
</dbReference>
<dbReference type="AGR" id="WB:WBGene00016623"/>
<dbReference type="WormBase" id="C44B7.1">
    <property type="protein sequence ID" value="CE25810"/>
    <property type="gene ID" value="WBGene00016623"/>
    <property type="gene designation" value="psmd-9"/>
</dbReference>
<dbReference type="eggNOG" id="KOG3129">
    <property type="taxonomic scope" value="Eukaryota"/>
</dbReference>
<dbReference type="GeneTree" id="ENSGT00390000004147"/>
<dbReference type="HOGENOM" id="CLU_073146_2_1_1"/>
<dbReference type="InParanoid" id="Q10920"/>
<dbReference type="OMA" id="DWGGRGM"/>
<dbReference type="OrthoDB" id="72325at2759"/>
<dbReference type="PhylomeDB" id="Q10920"/>
<dbReference type="Reactome" id="R-CEL-9907900">
    <property type="pathway name" value="Proteasome assembly"/>
</dbReference>
<dbReference type="PRO" id="PR:Q10920"/>
<dbReference type="Proteomes" id="UP000001940">
    <property type="component" value="Chromosome II"/>
</dbReference>
<dbReference type="Bgee" id="WBGene00016623">
    <property type="expression patterns" value="Expressed in germ line (C elegans) and 4 other cell types or tissues"/>
</dbReference>
<dbReference type="GO" id="GO:0005737">
    <property type="term" value="C:cytoplasm"/>
    <property type="evidence" value="ECO:0000318"/>
    <property type="project" value="GO_Central"/>
</dbReference>
<dbReference type="GO" id="GO:0005634">
    <property type="term" value="C:nucleus"/>
    <property type="evidence" value="ECO:0000318"/>
    <property type="project" value="GO_Central"/>
</dbReference>
<dbReference type="GO" id="GO:0070682">
    <property type="term" value="P:proteasome regulatory particle assembly"/>
    <property type="evidence" value="ECO:0000318"/>
    <property type="project" value="GO_Central"/>
</dbReference>
<dbReference type="FunFam" id="2.30.42.10:FF:000107">
    <property type="entry name" value="26S proteasome non-ATPase regulatory subunit 9"/>
    <property type="match status" value="1"/>
</dbReference>
<dbReference type="Gene3D" id="2.30.42.10">
    <property type="match status" value="1"/>
</dbReference>
<dbReference type="Gene3D" id="6.10.140.1710">
    <property type="match status" value="1"/>
</dbReference>
<dbReference type="InterPro" id="IPR040815">
    <property type="entry name" value="Nas2_N"/>
</dbReference>
<dbReference type="InterPro" id="IPR041489">
    <property type="entry name" value="PDZ_6"/>
</dbReference>
<dbReference type="InterPro" id="IPR036034">
    <property type="entry name" value="PDZ_sf"/>
</dbReference>
<dbReference type="InterPro" id="IPR035269">
    <property type="entry name" value="PSMD9"/>
</dbReference>
<dbReference type="PANTHER" id="PTHR12651">
    <property type="entry name" value="26S PROTEASOME NON-ATPASE REGULATORY SUBUNIT 9"/>
    <property type="match status" value="1"/>
</dbReference>
<dbReference type="PANTHER" id="PTHR12651:SF1">
    <property type="entry name" value="26S PROTEASOME NON-ATPASE REGULATORY SUBUNIT 9"/>
    <property type="match status" value="1"/>
</dbReference>
<dbReference type="Pfam" id="PF18265">
    <property type="entry name" value="Nas2_N"/>
    <property type="match status" value="1"/>
</dbReference>
<dbReference type="Pfam" id="PF17820">
    <property type="entry name" value="PDZ_6"/>
    <property type="match status" value="1"/>
</dbReference>
<dbReference type="SUPFAM" id="SSF50156">
    <property type="entry name" value="PDZ domain-like"/>
    <property type="match status" value="1"/>
</dbReference>
<name>PSMD9_CAEEL</name>
<proteinExistence type="evidence at protein level"/>
<accession>Q10920</accession>
<accession>G8JXY6</accession>
<accession>Q95QR4</accession>